<comment type="function">
    <text evidence="1">Regulatory subunit of the SLX1-SLX4 structure-specific endonuclease that resolves DNA secondary structures generated during DNA repair and recombination. Has endonuclease activity towards branched DNA substrates, introducing single-strand cuts in duplex DNA close to junctions with ss-DNA (By similarity).</text>
</comment>
<comment type="subunit">
    <text evidence="1">Forms a heterodimer with SLX1.</text>
</comment>
<comment type="subcellular location">
    <subcellularLocation>
        <location evidence="1">Nucleus</location>
    </subcellularLocation>
</comment>
<comment type="PTM">
    <text evidence="1">Phosphorylated in response to DNA damage.</text>
</comment>
<comment type="similarity">
    <text evidence="3">Belongs to the SLX4 family.</text>
</comment>
<sequence>MDFHRANRNLQLVESGVSDGRNPESFSLDETQVPVSSGFSSDSDKDQQEQIFINTQVQGRLDEAEEADKVRANLGQFRYDSQDSAISPKHKSAIQRPSARTTKRSSSSQRRKAPTKAQSLLKQLSGKHAKVQDMIKYQQKLDSLAGSQQRAKSKGKTTKTKKQQEKRYDTYNANEWQHIYNLLLEKFPHTRPSEVEDVYQYLYGDESEDQPLWNESQRPIEPESQDLGFLPPPPADKQRVSVLSLSQVMDDKHSREPDEDIIVPDSTDEEYIVIPIPSSPQPLRPPLATKPPLLTKPPLKKVESDAGTPKTAHSPSDGVIDLTNGSFKVVKSLISPLKEETAQVQVPATRMPTLGTTPNLAPTKEQPLRYRLHRSQLESFSAVEGLIVCSPGPSQDDVPVPDTESEDSAAEDHCMVELQPSILASRTPSPSVQSDWNSQSAQQLRQSMKSLGLKTSRSKRQMLHSLQQASQVLEIDTGGQENQRQEIHDYLTSLVQSSPVLLEKVYTFQPIASKELLTKLTEANPFVDVIDEYTIREWADYQGICLTTS</sequence>
<reference key="1">
    <citation type="journal article" date="2009" name="Genome Res.">
        <title>Comparative genomics of protoploid Saccharomycetaceae.</title>
        <authorList>
            <consortium name="The Genolevures Consortium"/>
            <person name="Souciet J.-L."/>
            <person name="Dujon B."/>
            <person name="Gaillardin C."/>
            <person name="Johnston M."/>
            <person name="Baret P.V."/>
            <person name="Cliften P."/>
            <person name="Sherman D.J."/>
            <person name="Weissenbach J."/>
            <person name="Westhof E."/>
            <person name="Wincker P."/>
            <person name="Jubin C."/>
            <person name="Poulain J."/>
            <person name="Barbe V."/>
            <person name="Segurens B."/>
            <person name="Artiguenave F."/>
            <person name="Anthouard V."/>
            <person name="Vacherie B."/>
            <person name="Val M.-E."/>
            <person name="Fulton R.S."/>
            <person name="Minx P."/>
            <person name="Wilson R."/>
            <person name="Durrens P."/>
            <person name="Jean G."/>
            <person name="Marck C."/>
            <person name="Martin T."/>
            <person name="Nikolski M."/>
            <person name="Rolland T."/>
            <person name="Seret M.-L."/>
            <person name="Casaregola S."/>
            <person name="Despons L."/>
            <person name="Fairhead C."/>
            <person name="Fischer G."/>
            <person name="Lafontaine I."/>
            <person name="Leh V."/>
            <person name="Lemaire M."/>
            <person name="de Montigny J."/>
            <person name="Neuveglise C."/>
            <person name="Thierry A."/>
            <person name="Blanc-Lenfle I."/>
            <person name="Bleykasten C."/>
            <person name="Diffels J."/>
            <person name="Fritsch E."/>
            <person name="Frangeul L."/>
            <person name="Goeffon A."/>
            <person name="Jauniaux N."/>
            <person name="Kachouri-Lafond R."/>
            <person name="Payen C."/>
            <person name="Potier S."/>
            <person name="Pribylova L."/>
            <person name="Ozanne C."/>
            <person name="Richard G.-F."/>
            <person name="Sacerdot C."/>
            <person name="Straub M.-L."/>
            <person name="Talla E."/>
        </authorList>
    </citation>
    <scope>NUCLEOTIDE SEQUENCE [LARGE SCALE GENOMIC DNA]</scope>
    <source>
        <strain>ATCC 2623 / CBS 732 / BCRC 21506 / NBRC 1130 / NCYC 568 / NRRL Y-229</strain>
    </source>
</reference>
<keyword id="KW-0227">DNA damage</keyword>
<keyword id="KW-0233">DNA recombination</keyword>
<keyword id="KW-0234">DNA repair</keyword>
<keyword id="KW-0539">Nucleus</keyword>
<keyword id="KW-0597">Phosphoprotein</keyword>
<keyword id="KW-1185">Reference proteome</keyword>
<accession>C5DY61</accession>
<feature type="chain" id="PRO_0000388051" description="Structure-specific endonuclease subunit SLX4">
    <location>
        <begin position="1"/>
        <end position="549"/>
    </location>
</feature>
<feature type="region of interest" description="Disordered" evidence="2">
    <location>
        <begin position="1"/>
        <end position="48"/>
    </location>
</feature>
<feature type="region of interest" description="Disordered" evidence="2">
    <location>
        <begin position="81"/>
        <end position="127"/>
    </location>
</feature>
<feature type="region of interest" description="Disordered" evidence="2">
    <location>
        <begin position="142"/>
        <end position="165"/>
    </location>
</feature>
<feature type="region of interest" description="Disordered" evidence="2">
    <location>
        <begin position="275"/>
        <end position="319"/>
    </location>
</feature>
<feature type="region of interest" description="Disordered" evidence="2">
    <location>
        <begin position="390"/>
        <end position="410"/>
    </location>
</feature>
<feature type="compositionally biased region" description="Polar residues" evidence="2">
    <location>
        <begin position="24"/>
        <end position="41"/>
    </location>
</feature>
<feature type="compositionally biased region" description="Low complexity" evidence="2">
    <location>
        <begin position="96"/>
        <end position="108"/>
    </location>
</feature>
<feature type="compositionally biased region" description="Basic residues" evidence="2">
    <location>
        <begin position="151"/>
        <end position="161"/>
    </location>
</feature>
<feature type="compositionally biased region" description="Pro residues" evidence="2">
    <location>
        <begin position="277"/>
        <end position="289"/>
    </location>
</feature>
<organism>
    <name type="scientific">Zygosaccharomyces rouxii (strain ATCC 2623 / CBS 732 / NBRC 1130 / NCYC 568 / NRRL Y-229)</name>
    <dbReference type="NCBI Taxonomy" id="559307"/>
    <lineage>
        <taxon>Eukaryota</taxon>
        <taxon>Fungi</taxon>
        <taxon>Dikarya</taxon>
        <taxon>Ascomycota</taxon>
        <taxon>Saccharomycotina</taxon>
        <taxon>Saccharomycetes</taxon>
        <taxon>Saccharomycetales</taxon>
        <taxon>Saccharomycetaceae</taxon>
        <taxon>Zygosaccharomyces</taxon>
    </lineage>
</organism>
<proteinExistence type="inferred from homology"/>
<protein>
    <recommendedName>
        <fullName>Structure-specific endonuclease subunit SLX4</fullName>
    </recommendedName>
</protein>
<name>SLX4_ZYGRC</name>
<dbReference type="EMBL" id="CU928178">
    <property type="protein sequence ID" value="CAR28722.1"/>
    <property type="molecule type" value="Genomic_DNA"/>
</dbReference>
<dbReference type="RefSeq" id="XP_002497655.1">
    <property type="nucleotide sequence ID" value="XM_002497610.1"/>
</dbReference>
<dbReference type="SMR" id="C5DY61"/>
<dbReference type="FunCoup" id="C5DY61">
    <property type="interactions" value="48"/>
</dbReference>
<dbReference type="STRING" id="559307.C5DY61"/>
<dbReference type="GeneID" id="8205420"/>
<dbReference type="KEGG" id="zro:ZYRO0F10516g"/>
<dbReference type="HOGENOM" id="CLU_022388_0_0_1"/>
<dbReference type="InParanoid" id="C5DY61"/>
<dbReference type="Proteomes" id="UP000008536">
    <property type="component" value="Chromosome F"/>
</dbReference>
<dbReference type="GO" id="GO:0033557">
    <property type="term" value="C:Slx1-Slx4 complex"/>
    <property type="evidence" value="ECO:0007669"/>
    <property type="project" value="InterPro"/>
</dbReference>
<dbReference type="GO" id="GO:0006310">
    <property type="term" value="P:DNA recombination"/>
    <property type="evidence" value="ECO:0007669"/>
    <property type="project" value="UniProtKB-KW"/>
</dbReference>
<dbReference type="GO" id="GO:0006281">
    <property type="term" value="P:DNA repair"/>
    <property type="evidence" value="ECO:0007669"/>
    <property type="project" value="UniProtKB-KW"/>
</dbReference>
<dbReference type="GO" id="GO:0006260">
    <property type="term" value="P:DNA replication"/>
    <property type="evidence" value="ECO:0007669"/>
    <property type="project" value="InterPro"/>
</dbReference>
<dbReference type="InterPro" id="IPR018574">
    <property type="entry name" value="Structure-sp_endonuc_su_Slx4"/>
</dbReference>
<dbReference type="Pfam" id="PF09494">
    <property type="entry name" value="Slx4"/>
    <property type="match status" value="1"/>
</dbReference>
<evidence type="ECO:0000250" key="1"/>
<evidence type="ECO:0000256" key="2">
    <source>
        <dbReference type="SAM" id="MobiDB-lite"/>
    </source>
</evidence>
<evidence type="ECO:0000305" key="3"/>
<gene>
    <name type="primary">SLX4</name>
    <name type="ordered locus">ZYRO0F10516g</name>
</gene>